<name>SELA_SALEP</name>
<reference key="1">
    <citation type="journal article" date="2008" name="Genome Res.">
        <title>Comparative genome analysis of Salmonella enteritidis PT4 and Salmonella gallinarum 287/91 provides insights into evolutionary and host adaptation pathways.</title>
        <authorList>
            <person name="Thomson N.R."/>
            <person name="Clayton D.J."/>
            <person name="Windhorst D."/>
            <person name="Vernikos G."/>
            <person name="Davidson S."/>
            <person name="Churcher C."/>
            <person name="Quail M.A."/>
            <person name="Stevens M."/>
            <person name="Jones M.A."/>
            <person name="Watson M."/>
            <person name="Barron A."/>
            <person name="Layton A."/>
            <person name="Pickard D."/>
            <person name="Kingsley R.A."/>
            <person name="Bignell A."/>
            <person name="Clark L."/>
            <person name="Harris B."/>
            <person name="Ormond D."/>
            <person name="Abdellah Z."/>
            <person name="Brooks K."/>
            <person name="Cherevach I."/>
            <person name="Chillingworth T."/>
            <person name="Woodward J."/>
            <person name="Norberczak H."/>
            <person name="Lord A."/>
            <person name="Arrowsmith C."/>
            <person name="Jagels K."/>
            <person name="Moule S."/>
            <person name="Mungall K."/>
            <person name="Saunders M."/>
            <person name="Whitehead S."/>
            <person name="Chabalgoity J.A."/>
            <person name="Maskell D."/>
            <person name="Humphreys T."/>
            <person name="Roberts M."/>
            <person name="Barrow P.A."/>
            <person name="Dougan G."/>
            <person name="Parkhill J."/>
        </authorList>
    </citation>
    <scope>NUCLEOTIDE SEQUENCE [LARGE SCALE GENOMIC DNA]</scope>
    <source>
        <strain>P125109</strain>
    </source>
</reference>
<accession>B5R5B6</accession>
<feature type="chain" id="PRO_1000124152" description="L-seryl-tRNA(Sec) selenium transferase">
    <location>
        <begin position="1"/>
        <end position="463"/>
    </location>
</feature>
<feature type="modified residue" description="N6-(pyridoxal phosphate)lysine" evidence="1">
    <location>
        <position position="295"/>
    </location>
</feature>
<gene>
    <name evidence="1" type="primary">selA</name>
    <name type="ordered locus">SEN3505</name>
</gene>
<sequence length="463" mass="50845">MTSETRTLYSQLPAIDRLLHDSAFLSLRDRYGHTQVVDLLRRMLDDARDVIRNTQTLPDWYADWAQEAKLRLENAAQSALRPVINLTGTVLHTNLGRALQAQEAVEAVTQAMRAPVTLEYDLDGAGRGHRDRALATLLCRITGAEDACIVNNNAAAVLLMLAATASGKEVVVSRGELVEIGGAFRIPDVMRQAGCTLHEVGTTNRTHAKDYRQAVNENTGLLMKVHTSNYSIEGFTKTVEEAELAEIGRELDIPVVADLGSGSLVDLSQYGLPKEPMPQQLIAAGVSLVSFSGDKLLGGPQAGIIVGKKAMIAQLQSHPLKRALRADKMTLAALEATLRLYLHPEALAEKLPTLRLLTRSEASIREQAQRLQARLAARYGDEFALEVKPCLSQIGSGSLPVDRLPSAAMTFTPHDGRGSRLEALAARWRMLPVPVIGRIYDGRLWLDMRCLEDESRFMEMMLK</sequence>
<dbReference type="EC" id="2.9.1.1" evidence="1"/>
<dbReference type="EMBL" id="AM933172">
    <property type="protein sequence ID" value="CAR35084.1"/>
    <property type="molecule type" value="Genomic_DNA"/>
</dbReference>
<dbReference type="RefSeq" id="WP_000200193.1">
    <property type="nucleotide sequence ID" value="NC_011294.1"/>
</dbReference>
<dbReference type="SMR" id="B5R5B6"/>
<dbReference type="KEGG" id="set:SEN3505"/>
<dbReference type="HOGENOM" id="CLU_038142_1_0_6"/>
<dbReference type="UniPathway" id="UPA00906">
    <property type="reaction ID" value="UER00896"/>
</dbReference>
<dbReference type="Proteomes" id="UP000000613">
    <property type="component" value="Chromosome"/>
</dbReference>
<dbReference type="GO" id="GO:0005737">
    <property type="term" value="C:cytoplasm"/>
    <property type="evidence" value="ECO:0007669"/>
    <property type="project" value="UniProtKB-SubCell"/>
</dbReference>
<dbReference type="GO" id="GO:0004125">
    <property type="term" value="F:L-seryl-tRNA(Sec) selenium transferase activity"/>
    <property type="evidence" value="ECO:0007669"/>
    <property type="project" value="UniProtKB-UniRule"/>
</dbReference>
<dbReference type="GO" id="GO:0001717">
    <property type="term" value="P:conversion of seryl-tRNAsec to selenocys-tRNAsec"/>
    <property type="evidence" value="ECO:0007669"/>
    <property type="project" value="UniProtKB-UniRule"/>
</dbReference>
<dbReference type="GO" id="GO:0001514">
    <property type="term" value="P:selenocysteine incorporation"/>
    <property type="evidence" value="ECO:0007669"/>
    <property type="project" value="UniProtKB-UniRule"/>
</dbReference>
<dbReference type="FunFam" id="3.40.640.10:FF:000028">
    <property type="entry name" value="L-seryl-tRNA(Sec) selenium transferase"/>
    <property type="match status" value="1"/>
</dbReference>
<dbReference type="FunFam" id="3.90.1150.180:FF:000001">
    <property type="entry name" value="L-seryl-tRNA(Sec) selenium transferase"/>
    <property type="match status" value="1"/>
</dbReference>
<dbReference type="Gene3D" id="3.90.1150.180">
    <property type="match status" value="1"/>
</dbReference>
<dbReference type="Gene3D" id="3.40.640.10">
    <property type="entry name" value="Type I PLP-dependent aspartate aminotransferase-like (Major domain)"/>
    <property type="match status" value="1"/>
</dbReference>
<dbReference type="HAMAP" id="MF_00423">
    <property type="entry name" value="SelA"/>
    <property type="match status" value="1"/>
</dbReference>
<dbReference type="InterPro" id="IPR015424">
    <property type="entry name" value="PyrdxlP-dep_Trfase"/>
</dbReference>
<dbReference type="InterPro" id="IPR015421">
    <property type="entry name" value="PyrdxlP-dep_Trfase_major"/>
</dbReference>
<dbReference type="InterPro" id="IPR018319">
    <property type="entry name" value="SelA-like"/>
</dbReference>
<dbReference type="InterPro" id="IPR004534">
    <property type="entry name" value="SelA_trans"/>
</dbReference>
<dbReference type="InterPro" id="IPR025862">
    <property type="entry name" value="SelA_trans_N_dom"/>
</dbReference>
<dbReference type="NCBIfam" id="TIGR00474">
    <property type="entry name" value="selA"/>
    <property type="match status" value="1"/>
</dbReference>
<dbReference type="PANTHER" id="PTHR32328">
    <property type="entry name" value="L-SERYL-TRNA(SEC) SELENIUM TRANSFERASE"/>
    <property type="match status" value="1"/>
</dbReference>
<dbReference type="PANTHER" id="PTHR32328:SF0">
    <property type="entry name" value="L-SERYL-TRNA(SEC) SELENIUM TRANSFERASE"/>
    <property type="match status" value="1"/>
</dbReference>
<dbReference type="Pfam" id="PF12390">
    <property type="entry name" value="Se-cys_synth_N"/>
    <property type="match status" value="1"/>
</dbReference>
<dbReference type="Pfam" id="PF03841">
    <property type="entry name" value="SelA"/>
    <property type="match status" value="1"/>
</dbReference>
<dbReference type="SUPFAM" id="SSF53383">
    <property type="entry name" value="PLP-dependent transferases"/>
    <property type="match status" value="1"/>
</dbReference>
<keyword id="KW-0963">Cytoplasm</keyword>
<keyword id="KW-0648">Protein biosynthesis</keyword>
<keyword id="KW-0663">Pyridoxal phosphate</keyword>
<keyword id="KW-0711">Selenium</keyword>
<keyword id="KW-0808">Transferase</keyword>
<organism>
    <name type="scientific">Salmonella enteritidis PT4 (strain P125109)</name>
    <dbReference type="NCBI Taxonomy" id="550537"/>
    <lineage>
        <taxon>Bacteria</taxon>
        <taxon>Pseudomonadati</taxon>
        <taxon>Pseudomonadota</taxon>
        <taxon>Gammaproteobacteria</taxon>
        <taxon>Enterobacterales</taxon>
        <taxon>Enterobacteriaceae</taxon>
        <taxon>Salmonella</taxon>
    </lineage>
</organism>
<comment type="function">
    <text evidence="1">Converts seryl-tRNA(Sec) to selenocysteinyl-tRNA(Sec) required for selenoprotein biosynthesis.</text>
</comment>
<comment type="catalytic activity">
    <reaction evidence="1">
        <text>L-seryl-tRNA(Sec) + selenophosphate + H(+) = L-selenocysteinyl-tRNA(Sec) + phosphate</text>
        <dbReference type="Rhea" id="RHEA:22728"/>
        <dbReference type="Rhea" id="RHEA-COMP:9742"/>
        <dbReference type="Rhea" id="RHEA-COMP:9743"/>
        <dbReference type="ChEBI" id="CHEBI:15378"/>
        <dbReference type="ChEBI" id="CHEBI:16144"/>
        <dbReference type="ChEBI" id="CHEBI:43474"/>
        <dbReference type="ChEBI" id="CHEBI:78533"/>
        <dbReference type="ChEBI" id="CHEBI:78573"/>
        <dbReference type="EC" id="2.9.1.1"/>
    </reaction>
</comment>
<comment type="cofactor">
    <cofactor evidence="1">
        <name>pyridoxal 5'-phosphate</name>
        <dbReference type="ChEBI" id="CHEBI:597326"/>
    </cofactor>
</comment>
<comment type="pathway">
    <text evidence="1">Aminoacyl-tRNA biosynthesis; selenocysteinyl-tRNA(Sec) biosynthesis; selenocysteinyl-tRNA(Sec) from L-seryl-tRNA(Sec) (bacterial route): step 1/1.</text>
</comment>
<comment type="subunit">
    <text evidence="1">Homodecamer; pentamer of dimers. Binds only one seryl-tRNA(Sec) per dimer.</text>
</comment>
<comment type="subcellular location">
    <subcellularLocation>
        <location evidence="1">Cytoplasm</location>
    </subcellularLocation>
</comment>
<comment type="similarity">
    <text evidence="1">Belongs to the SelA family.</text>
</comment>
<proteinExistence type="inferred from homology"/>
<protein>
    <recommendedName>
        <fullName evidence="1">L-seryl-tRNA(Sec) selenium transferase</fullName>
        <ecNumber evidence="1">2.9.1.1</ecNumber>
    </recommendedName>
    <alternativeName>
        <fullName evidence="1">Selenocysteine synthase</fullName>
        <shortName evidence="1">Sec synthase</shortName>
    </alternativeName>
    <alternativeName>
        <fullName evidence="1">Selenocysteinyl-tRNA(Sec) synthase</fullName>
    </alternativeName>
</protein>
<evidence type="ECO:0000255" key="1">
    <source>
        <dbReference type="HAMAP-Rule" id="MF_00423"/>
    </source>
</evidence>